<proteinExistence type="inferred from homology"/>
<comment type="function">
    <text evidence="1">Methylates ribosomal protein L11.</text>
</comment>
<comment type="catalytic activity">
    <reaction evidence="1">
        <text>L-lysyl-[protein] + 3 S-adenosyl-L-methionine = N(6),N(6),N(6)-trimethyl-L-lysyl-[protein] + 3 S-adenosyl-L-homocysteine + 3 H(+)</text>
        <dbReference type="Rhea" id="RHEA:54192"/>
        <dbReference type="Rhea" id="RHEA-COMP:9752"/>
        <dbReference type="Rhea" id="RHEA-COMP:13826"/>
        <dbReference type="ChEBI" id="CHEBI:15378"/>
        <dbReference type="ChEBI" id="CHEBI:29969"/>
        <dbReference type="ChEBI" id="CHEBI:57856"/>
        <dbReference type="ChEBI" id="CHEBI:59789"/>
        <dbReference type="ChEBI" id="CHEBI:61961"/>
    </reaction>
</comment>
<comment type="subcellular location">
    <subcellularLocation>
        <location evidence="1">Cytoplasm</location>
    </subcellularLocation>
</comment>
<comment type="similarity">
    <text evidence="1">Belongs to the methyltransferase superfamily. PrmA family.</text>
</comment>
<keyword id="KW-0963">Cytoplasm</keyword>
<keyword id="KW-0489">Methyltransferase</keyword>
<keyword id="KW-0949">S-adenosyl-L-methionine</keyword>
<keyword id="KW-0808">Transferase</keyword>
<sequence>MPWLQIRLAITPDQAGALEDRLLELGAVSVTFMDAEDQPIFEPDLGTTPLWSHTHLLALFEADTDADALLAHLRLLRGGELPEHQVERIKDQDWERSWMDNFQPMRFGRRLWIVPSWHQAPEPGAVNLLLDPGLAFGTGTHPTTALCLEWLDGQELAGRSLLDFGCGSGILAIAALLLGAERAVGTDIDPQALQASRDNALRNGIDPARFPLHLPADLPRQPADVVVANILAGPLVQLAPQLASLVRPGGRLALSGILAEQAGEVRAAYEGAFVLAPTTEKDGWVRIDGVRR</sequence>
<organism>
    <name type="scientific">Azotobacter vinelandii (strain DJ / ATCC BAA-1303)</name>
    <dbReference type="NCBI Taxonomy" id="322710"/>
    <lineage>
        <taxon>Bacteria</taxon>
        <taxon>Pseudomonadati</taxon>
        <taxon>Pseudomonadota</taxon>
        <taxon>Gammaproteobacteria</taxon>
        <taxon>Pseudomonadales</taxon>
        <taxon>Pseudomonadaceae</taxon>
        <taxon>Azotobacter</taxon>
    </lineage>
</organism>
<reference key="1">
    <citation type="journal article" date="2009" name="J. Bacteriol.">
        <title>Genome sequence of Azotobacter vinelandii, an obligate aerobe specialized to support diverse anaerobic metabolic processes.</title>
        <authorList>
            <person name="Setubal J.C."/>
            <person name="Dos Santos P."/>
            <person name="Goldman B.S."/>
            <person name="Ertesvaag H."/>
            <person name="Espin G."/>
            <person name="Rubio L.M."/>
            <person name="Valla S."/>
            <person name="Almeida N.F."/>
            <person name="Balasubramanian D."/>
            <person name="Cromes L."/>
            <person name="Curatti L."/>
            <person name="Du Z."/>
            <person name="Godsy E."/>
            <person name="Goodner B."/>
            <person name="Hellner-Burris K."/>
            <person name="Hernandez J.A."/>
            <person name="Houmiel K."/>
            <person name="Imperial J."/>
            <person name="Kennedy C."/>
            <person name="Larson T.J."/>
            <person name="Latreille P."/>
            <person name="Ligon L.S."/>
            <person name="Lu J."/>
            <person name="Maerk M."/>
            <person name="Miller N.M."/>
            <person name="Norton S."/>
            <person name="O'Carroll I.P."/>
            <person name="Paulsen I."/>
            <person name="Raulfs E.C."/>
            <person name="Roemer R."/>
            <person name="Rosser J."/>
            <person name="Segura D."/>
            <person name="Slater S."/>
            <person name="Stricklin S.L."/>
            <person name="Studholme D.J."/>
            <person name="Sun J."/>
            <person name="Viana C.J."/>
            <person name="Wallin E."/>
            <person name="Wang B."/>
            <person name="Wheeler C."/>
            <person name="Zhu H."/>
            <person name="Dean D.R."/>
            <person name="Dixon R."/>
            <person name="Wood D."/>
        </authorList>
    </citation>
    <scope>NUCLEOTIDE SEQUENCE [LARGE SCALE GENOMIC DNA]</scope>
    <source>
        <strain>DJ / ATCC BAA-1303</strain>
    </source>
</reference>
<gene>
    <name evidence="1" type="primary">prmA</name>
    <name type="ordered locus">Avin_06940</name>
</gene>
<feature type="chain" id="PRO_1000212741" description="Ribosomal protein L11 methyltransferase">
    <location>
        <begin position="1"/>
        <end position="292"/>
    </location>
</feature>
<feature type="binding site" evidence="1">
    <location>
        <position position="144"/>
    </location>
    <ligand>
        <name>S-adenosyl-L-methionine</name>
        <dbReference type="ChEBI" id="CHEBI:59789"/>
    </ligand>
</feature>
<feature type="binding site" evidence="1">
    <location>
        <position position="165"/>
    </location>
    <ligand>
        <name>S-adenosyl-L-methionine</name>
        <dbReference type="ChEBI" id="CHEBI:59789"/>
    </ligand>
</feature>
<feature type="binding site" evidence="1">
    <location>
        <position position="187"/>
    </location>
    <ligand>
        <name>S-adenosyl-L-methionine</name>
        <dbReference type="ChEBI" id="CHEBI:59789"/>
    </ligand>
</feature>
<feature type="binding site" evidence="1">
    <location>
        <position position="229"/>
    </location>
    <ligand>
        <name>S-adenosyl-L-methionine</name>
        <dbReference type="ChEBI" id="CHEBI:59789"/>
    </ligand>
</feature>
<dbReference type="EC" id="2.1.1.-" evidence="1"/>
<dbReference type="EMBL" id="CP001157">
    <property type="protein sequence ID" value="ACO76944.1"/>
    <property type="molecule type" value="Genomic_DNA"/>
</dbReference>
<dbReference type="RefSeq" id="WP_012699369.1">
    <property type="nucleotide sequence ID" value="NC_012560.1"/>
</dbReference>
<dbReference type="SMR" id="C1DLJ6"/>
<dbReference type="STRING" id="322710.Avin_06940"/>
<dbReference type="EnsemblBacteria" id="ACO76944">
    <property type="protein sequence ID" value="ACO76944"/>
    <property type="gene ID" value="Avin_06940"/>
</dbReference>
<dbReference type="GeneID" id="88184101"/>
<dbReference type="KEGG" id="avn:Avin_06940"/>
<dbReference type="eggNOG" id="COG2264">
    <property type="taxonomic scope" value="Bacteria"/>
</dbReference>
<dbReference type="HOGENOM" id="CLU_049382_4_1_6"/>
<dbReference type="OrthoDB" id="9785995at2"/>
<dbReference type="Proteomes" id="UP000002424">
    <property type="component" value="Chromosome"/>
</dbReference>
<dbReference type="GO" id="GO:0005829">
    <property type="term" value="C:cytosol"/>
    <property type="evidence" value="ECO:0007669"/>
    <property type="project" value="TreeGrafter"/>
</dbReference>
<dbReference type="GO" id="GO:0016279">
    <property type="term" value="F:protein-lysine N-methyltransferase activity"/>
    <property type="evidence" value="ECO:0007669"/>
    <property type="project" value="TreeGrafter"/>
</dbReference>
<dbReference type="GO" id="GO:0032259">
    <property type="term" value="P:methylation"/>
    <property type="evidence" value="ECO:0007669"/>
    <property type="project" value="UniProtKB-KW"/>
</dbReference>
<dbReference type="CDD" id="cd02440">
    <property type="entry name" value="AdoMet_MTases"/>
    <property type="match status" value="1"/>
</dbReference>
<dbReference type="Gene3D" id="3.40.50.150">
    <property type="entry name" value="Vaccinia Virus protein VP39"/>
    <property type="match status" value="1"/>
</dbReference>
<dbReference type="HAMAP" id="MF_00735">
    <property type="entry name" value="Methyltr_PrmA"/>
    <property type="match status" value="1"/>
</dbReference>
<dbReference type="InterPro" id="IPR050078">
    <property type="entry name" value="Ribosomal_L11_MeTrfase_PrmA"/>
</dbReference>
<dbReference type="InterPro" id="IPR004498">
    <property type="entry name" value="Ribosomal_PrmA_MeTrfase"/>
</dbReference>
<dbReference type="InterPro" id="IPR029063">
    <property type="entry name" value="SAM-dependent_MTases_sf"/>
</dbReference>
<dbReference type="NCBIfam" id="TIGR00406">
    <property type="entry name" value="prmA"/>
    <property type="match status" value="1"/>
</dbReference>
<dbReference type="PANTHER" id="PTHR43648">
    <property type="entry name" value="ELECTRON TRANSFER FLAVOPROTEIN BETA SUBUNIT LYSINE METHYLTRANSFERASE"/>
    <property type="match status" value="1"/>
</dbReference>
<dbReference type="PANTHER" id="PTHR43648:SF1">
    <property type="entry name" value="ELECTRON TRANSFER FLAVOPROTEIN BETA SUBUNIT LYSINE METHYLTRANSFERASE"/>
    <property type="match status" value="1"/>
</dbReference>
<dbReference type="Pfam" id="PF06325">
    <property type="entry name" value="PrmA"/>
    <property type="match status" value="1"/>
</dbReference>
<dbReference type="PIRSF" id="PIRSF000401">
    <property type="entry name" value="RPL11_MTase"/>
    <property type="match status" value="1"/>
</dbReference>
<dbReference type="SUPFAM" id="SSF53335">
    <property type="entry name" value="S-adenosyl-L-methionine-dependent methyltransferases"/>
    <property type="match status" value="1"/>
</dbReference>
<name>PRMA_AZOVD</name>
<protein>
    <recommendedName>
        <fullName evidence="1">Ribosomal protein L11 methyltransferase</fullName>
        <shortName evidence="1">L11 Mtase</shortName>
        <ecNumber evidence="1">2.1.1.-</ecNumber>
    </recommendedName>
</protein>
<evidence type="ECO:0000255" key="1">
    <source>
        <dbReference type="HAMAP-Rule" id="MF_00735"/>
    </source>
</evidence>
<accession>C1DLJ6</accession>